<keyword id="KW-0137">Centromere</keyword>
<keyword id="KW-0158">Chromosome</keyword>
<keyword id="KW-0995">Kinetochore</keyword>
<keyword id="KW-0597">Phosphoprotein</keyword>
<keyword id="KW-1185">Reference proteome</keyword>
<keyword id="KW-0833">Ubl conjugation pathway</keyword>
<comment type="function">
    <text evidence="1">Probably recognizes and binds to some phosphorylated proteins and promotes their ubiquitination and degradation.</text>
</comment>
<comment type="subunit">
    <text evidence="1">Part of a SCF (SKP1-cullin-F-box) protein ligase complex.</text>
</comment>
<comment type="subcellular location">
    <subcellularLocation>
        <location evidence="2">Chromosome</location>
        <location evidence="2">Centromere</location>
        <location evidence="2">Kinetochore</location>
    </subcellularLocation>
</comment>
<organism>
    <name type="scientific">Bos taurus</name>
    <name type="common">Bovine</name>
    <dbReference type="NCBI Taxonomy" id="9913"/>
    <lineage>
        <taxon>Eukaryota</taxon>
        <taxon>Metazoa</taxon>
        <taxon>Chordata</taxon>
        <taxon>Craniata</taxon>
        <taxon>Vertebrata</taxon>
        <taxon>Euteleostomi</taxon>
        <taxon>Mammalia</taxon>
        <taxon>Eutheria</taxon>
        <taxon>Laurasiatheria</taxon>
        <taxon>Artiodactyla</taxon>
        <taxon>Ruminantia</taxon>
        <taxon>Pecora</taxon>
        <taxon>Bovidae</taxon>
        <taxon>Bovinae</taxon>
        <taxon>Bos</taxon>
    </lineage>
</organism>
<proteinExistence type="evidence at transcript level"/>
<evidence type="ECO:0000250" key="1"/>
<evidence type="ECO:0000250" key="2">
    <source>
        <dbReference type="UniProtKB" id="Q9NVF7"/>
    </source>
</evidence>
<evidence type="ECO:0000255" key="3">
    <source>
        <dbReference type="PROSITE-ProRule" id="PRU00080"/>
    </source>
</evidence>
<evidence type="ECO:0000256" key="4">
    <source>
        <dbReference type="SAM" id="MobiDB-lite"/>
    </source>
</evidence>
<protein>
    <recommendedName>
        <fullName>F-box only protein 28</fullName>
    </recommendedName>
</protein>
<reference key="1">
    <citation type="submission" date="2005-12" db="EMBL/GenBank/DDBJ databases">
        <authorList>
            <consortium name="NIH - Mammalian Gene Collection (MGC) project"/>
        </authorList>
    </citation>
    <scope>NUCLEOTIDE SEQUENCE [LARGE SCALE MRNA]</scope>
    <source>
        <strain>Crossbred X Angus</strain>
        <tissue>Liver</tissue>
    </source>
</reference>
<dbReference type="EMBL" id="BC111213">
    <property type="protein sequence ID" value="AAI11214.1"/>
    <property type="molecule type" value="mRNA"/>
</dbReference>
<dbReference type="RefSeq" id="NP_001039890.1">
    <property type="nucleotide sequence ID" value="NM_001046425.1"/>
</dbReference>
<dbReference type="SMR" id="Q2NL16"/>
<dbReference type="FunCoup" id="Q2NL16">
    <property type="interactions" value="4122"/>
</dbReference>
<dbReference type="STRING" id="9913.ENSBTAP00000026033"/>
<dbReference type="PaxDb" id="9913-ENSBTAP00000026033"/>
<dbReference type="Ensembl" id="ENSBTAT00000026033.4">
    <property type="protein sequence ID" value="ENSBTAP00000026033.3"/>
    <property type="gene ID" value="ENSBTAG00000019538.5"/>
</dbReference>
<dbReference type="GeneID" id="537745"/>
<dbReference type="KEGG" id="bta:537745"/>
<dbReference type="CTD" id="23219"/>
<dbReference type="VEuPathDB" id="HostDB:ENSBTAG00000019538"/>
<dbReference type="VGNC" id="VGNC:28901">
    <property type="gene designation" value="FBXO28"/>
</dbReference>
<dbReference type="eggNOG" id="ENOG502QT70">
    <property type="taxonomic scope" value="Eukaryota"/>
</dbReference>
<dbReference type="GeneTree" id="ENSGT00390000002970"/>
<dbReference type="HOGENOM" id="CLU_024146_1_1_1"/>
<dbReference type="InParanoid" id="Q2NL16"/>
<dbReference type="OMA" id="SSHFPRC"/>
<dbReference type="OrthoDB" id="5860767at2759"/>
<dbReference type="TreeFam" id="TF324672"/>
<dbReference type="Proteomes" id="UP000009136">
    <property type="component" value="Chromosome 16"/>
</dbReference>
<dbReference type="Bgee" id="ENSBTAG00000019538">
    <property type="expression patterns" value="Expressed in granulosa cell and 110 other cell types or tissues"/>
</dbReference>
<dbReference type="GO" id="GO:0000776">
    <property type="term" value="C:kinetochore"/>
    <property type="evidence" value="ECO:0000250"/>
    <property type="project" value="UniProtKB"/>
</dbReference>
<dbReference type="GO" id="GO:0042802">
    <property type="term" value="F:identical protein binding"/>
    <property type="evidence" value="ECO:0007669"/>
    <property type="project" value="Ensembl"/>
</dbReference>
<dbReference type="GO" id="GO:0000209">
    <property type="term" value="P:protein polyubiquitination"/>
    <property type="evidence" value="ECO:0000318"/>
    <property type="project" value="GO_Central"/>
</dbReference>
<dbReference type="CDD" id="cd22100">
    <property type="entry name" value="F-box_FBXO28"/>
    <property type="match status" value="1"/>
</dbReference>
<dbReference type="InterPro" id="IPR036047">
    <property type="entry name" value="F-box-like_dom_sf"/>
</dbReference>
<dbReference type="InterPro" id="IPR001810">
    <property type="entry name" value="F-box_dom"/>
</dbReference>
<dbReference type="InterPro" id="IPR039719">
    <property type="entry name" value="FBXO28"/>
</dbReference>
<dbReference type="PANTHER" id="PTHR13252">
    <property type="entry name" value="F-BOX ONLY PROTEIN 28"/>
    <property type="match status" value="1"/>
</dbReference>
<dbReference type="PANTHER" id="PTHR13252:SF9">
    <property type="entry name" value="F-BOX ONLY PROTEIN 28"/>
    <property type="match status" value="1"/>
</dbReference>
<dbReference type="Pfam" id="PF00646">
    <property type="entry name" value="F-box"/>
    <property type="match status" value="1"/>
</dbReference>
<dbReference type="SUPFAM" id="SSF81383">
    <property type="entry name" value="F-box domain"/>
    <property type="match status" value="1"/>
</dbReference>
<dbReference type="PROSITE" id="PS50181">
    <property type="entry name" value="FBOX"/>
    <property type="match status" value="1"/>
</dbReference>
<gene>
    <name type="primary">FBXO28</name>
</gene>
<sequence>MAAASEERMAEEGGGGHGDGGSPSAIASTQRLPPPPPPQPPQPGSQAPPAPALAPDQLPQNNTLVALPIVAIENILSFMSYDEISQLRLVCKRMDLVCQRMLNQGFLKVERYHNLCQKQVKAQLPRRESERRNHSLARHADILAAVETRLSLLNMTFMKYVDSNLCCFIPGKVIDEIYRVLRYVNSTRAPQRAHEVLQELRDISSMAMEYFDEKIVPILKRKLPGSDVSGRLMGSPPVPGPSAALTTMQLFSKQNPSRQEVTKLQQQVKTNGAGVTVLRREISELRTKVQEQQKQLQDQDQKLLEQTQIIGEQNARLAELERKLREVMESAVGNSSGSGQSEESPRKRKKAAEAIDSLRKSKRLRNRK</sequence>
<feature type="chain" id="PRO_0000259957" description="F-box only protein 28">
    <location>
        <begin position="1"/>
        <end position="368"/>
    </location>
</feature>
<feature type="domain" description="F-box" evidence="3">
    <location>
        <begin position="61"/>
        <end position="109"/>
    </location>
</feature>
<feature type="region of interest" description="Disordered" evidence="4">
    <location>
        <begin position="1"/>
        <end position="57"/>
    </location>
</feature>
<feature type="region of interest" description="Disordered" evidence="4">
    <location>
        <begin position="328"/>
        <end position="368"/>
    </location>
</feature>
<feature type="compositionally biased region" description="Basic and acidic residues" evidence="4">
    <location>
        <begin position="1"/>
        <end position="11"/>
    </location>
</feature>
<feature type="compositionally biased region" description="Gly residues" evidence="4">
    <location>
        <begin position="12"/>
        <end position="21"/>
    </location>
</feature>
<feature type="compositionally biased region" description="Pro residues" evidence="4">
    <location>
        <begin position="32"/>
        <end position="52"/>
    </location>
</feature>
<feature type="modified residue" description="Phosphoserine" evidence="2">
    <location>
        <position position="235"/>
    </location>
</feature>
<feature type="modified residue" description="Phosphoserine" evidence="2">
    <location>
        <position position="242"/>
    </location>
</feature>
<feature type="modified residue" description="Phosphothreonine" evidence="2">
    <location>
        <position position="270"/>
    </location>
</feature>
<feature type="modified residue" description="Phosphoserine" evidence="2">
    <location>
        <position position="344"/>
    </location>
</feature>
<accession>Q2NL16</accession>
<name>FBX28_BOVIN</name>